<organism>
    <name type="scientific">Schizosaccharomyces pombe (strain 972 / ATCC 24843)</name>
    <name type="common">Fission yeast</name>
    <dbReference type="NCBI Taxonomy" id="284812"/>
    <lineage>
        <taxon>Eukaryota</taxon>
        <taxon>Fungi</taxon>
        <taxon>Dikarya</taxon>
        <taxon>Ascomycota</taxon>
        <taxon>Taphrinomycotina</taxon>
        <taxon>Schizosaccharomycetes</taxon>
        <taxon>Schizosaccharomycetales</taxon>
        <taxon>Schizosaccharomycetaceae</taxon>
        <taxon>Schizosaccharomyces</taxon>
    </lineage>
</organism>
<sequence length="1220" mass="137883">MEEGILLKKYVESSDKDIRYMALSDLAARLNDANHLKNLKLESFPDTLDVLLQALSDASPEVQQEAVRCVAIISSKIPQDKLKSTVENLLSGVAGKKSKNYLSALSLLLSNSNVQPFVNKFYTSTVFPSFLQILKQYNVAQEEFFAILCVVCDSLEIYHSNLSTLLPNNFELCIDVFQKCTTQCQRELIIKKACYLLSDVSLYGPRFAYKYIIEVLDRGLGPSTQMSEVNISIKLLNEILLSSKKEKDSSTSFISTAVADYTNKILSLLKKEEAPDELTQKLLEVLGLLLEYQQVNILKIWPELHGLLISKISYDPNLISDTNDEDDIADFLEEMSDYSSIYEDEEDVSWIVRRESLKVVLSVILSRLEYLPIVLQALGTSVVSKLNDREESVCLISIEVLKQAFLHVPRWIEVYATSNDRKRRYEGLPSDRSAISDTSIYLVSVIGKHVSKLSDKTPLSIVSELLNLVTVIFSSRDLGVQSEFSNLSSIIYRFPDFSTLDIKIKLNLVRLISAIISCGCEEIENMESKMSTILSLAVQNNYPQLSYEALITELSFCKYIHKKQPTNVSTDFSTMIDSSLQLLESKISDLKVRLALIDLVSQYVILFYEPDFDSIFLRRVLIILCKKLQEEPTRSAAARALCDIFMSVTDITKIENGTKIYEEILQDCCRHIDKSGNEFTTAYLELLEVLLKVGQKYLAESLLEHILGLLIETLKRNTENTVAILKCLLIIPLSILLKSKNLLIDTIISHLQSSTIHLNEESVCLLSRIIAVISKEEDLELIINSFTCAQKPVEEMVTLALIAAQLICIFQSKAIVTSLNKSFMSPKSEVRIKVFTTLIFGQLDYGKLTLPANEYFDTIASNLNSPNADVMKAAAIALGSLTSQSEKFIKELCALYVSDAYDKELLLISFLTFLKKSKIDYETADKIWDILSKDIENIKDFSTSPFRTLLSECLGLLICNESSSLYYKLELLSSSEASNHMLLSLSVFRFSLTLDCPKLKAYEKQFFEKAYKLFQNPDLEVSQETLQVIISVIKNRRSCIADVYNELLQGLISKSSVDSSNVHVVQMGPFQHVVDNSINQRQLVFETLYSLLDIPESLNHLTHFLQVSVMGLEDEHYIKLVSLSILEKLVDCSPSIIDEQVDTILEALRKIIELRKTEKTLKTDSDNILDLVRSALRVLFTMKLKCDNPVISEFESQVQKGPYSLEYEGIKNEIKTTIKT</sequence>
<proteinExistence type="inferred from homology"/>
<gene>
    <name type="primary">knd1</name>
    <name type="ORF">SPAC1565.07c</name>
</gene>
<evidence type="ECO:0000269" key="1">
    <source>
    </source>
</evidence>
<evidence type="ECO:0000305" key="2"/>
<evidence type="ECO:0000305" key="3">
    <source>
    </source>
</evidence>
<dbReference type="EMBL" id="CU329670">
    <property type="protein sequence ID" value="CAB99274.1"/>
    <property type="molecule type" value="Genomic_DNA"/>
</dbReference>
<dbReference type="RefSeq" id="NP_593286.1">
    <property type="nucleotide sequence ID" value="NM_001018716.2"/>
</dbReference>
<dbReference type="SMR" id="Q9P3A8"/>
<dbReference type="BioGRID" id="279217">
    <property type="interactions" value="61"/>
</dbReference>
<dbReference type="FunCoup" id="Q9P3A8">
    <property type="interactions" value="794"/>
</dbReference>
<dbReference type="STRING" id="284812.Q9P3A8"/>
<dbReference type="iPTMnet" id="Q9P3A8"/>
<dbReference type="PaxDb" id="4896-SPAC1565.07c.1"/>
<dbReference type="EnsemblFungi" id="SPAC1565.07c.1">
    <property type="protein sequence ID" value="SPAC1565.07c.1:pep"/>
    <property type="gene ID" value="SPAC1565.07c"/>
</dbReference>
<dbReference type="GeneID" id="2542767"/>
<dbReference type="KEGG" id="spo:2542767"/>
<dbReference type="PomBase" id="SPAC1565.07c">
    <property type="gene designation" value="knd1"/>
</dbReference>
<dbReference type="VEuPathDB" id="FungiDB:SPAC1565.07c"/>
<dbReference type="eggNOG" id="KOG1824">
    <property type="taxonomic scope" value="Eukaryota"/>
</dbReference>
<dbReference type="HOGENOM" id="CLU_007157_0_0_1"/>
<dbReference type="InParanoid" id="Q9P3A8"/>
<dbReference type="OMA" id="AYIPHFQ"/>
<dbReference type="PhylomeDB" id="Q9P3A8"/>
<dbReference type="Reactome" id="R-SPO-6798695">
    <property type="pathway name" value="Neutrophil degranulation"/>
</dbReference>
<dbReference type="Reactome" id="R-SPO-8951664">
    <property type="pathway name" value="Neddylation"/>
</dbReference>
<dbReference type="Reactome" id="R-SPO-917937">
    <property type="pathway name" value="Iron uptake and transport"/>
</dbReference>
<dbReference type="PRO" id="PR:Q9P3A8"/>
<dbReference type="Proteomes" id="UP000002485">
    <property type="component" value="Chromosome I"/>
</dbReference>
<dbReference type="GO" id="GO:0031461">
    <property type="term" value="C:cullin-RING ubiquitin ligase complex"/>
    <property type="evidence" value="ECO:0000250"/>
    <property type="project" value="PomBase"/>
</dbReference>
<dbReference type="GO" id="GO:0005634">
    <property type="term" value="C:nucleus"/>
    <property type="evidence" value="ECO:0007005"/>
    <property type="project" value="PomBase"/>
</dbReference>
<dbReference type="GO" id="GO:0045116">
    <property type="term" value="P:protein neddylation"/>
    <property type="evidence" value="ECO:0000250"/>
    <property type="project" value="PomBase"/>
</dbReference>
<dbReference type="GO" id="GO:0016567">
    <property type="term" value="P:protein ubiquitination"/>
    <property type="evidence" value="ECO:0000318"/>
    <property type="project" value="GO_Central"/>
</dbReference>
<dbReference type="GO" id="GO:0010265">
    <property type="term" value="P:SCF complex assembly"/>
    <property type="evidence" value="ECO:0000318"/>
    <property type="project" value="GO_Central"/>
</dbReference>
<dbReference type="Gene3D" id="1.25.10.10">
    <property type="entry name" value="Leucine-rich Repeat Variant"/>
    <property type="match status" value="1"/>
</dbReference>
<dbReference type="InterPro" id="IPR011989">
    <property type="entry name" value="ARM-like"/>
</dbReference>
<dbReference type="InterPro" id="IPR016024">
    <property type="entry name" value="ARM-type_fold"/>
</dbReference>
<dbReference type="InterPro" id="IPR039852">
    <property type="entry name" value="CAND1/CAND2"/>
</dbReference>
<dbReference type="InterPro" id="IPR013932">
    <property type="entry name" value="TATA-bd_TIP120"/>
</dbReference>
<dbReference type="PANTHER" id="PTHR12696">
    <property type="entry name" value="TIP120"/>
    <property type="match status" value="1"/>
</dbReference>
<dbReference type="Pfam" id="PF08623">
    <property type="entry name" value="TIP120"/>
    <property type="match status" value="1"/>
</dbReference>
<dbReference type="SUPFAM" id="SSF48371">
    <property type="entry name" value="ARM repeat"/>
    <property type="match status" value="1"/>
</dbReference>
<reference key="1">
    <citation type="journal article" date="2002" name="Nature">
        <title>The genome sequence of Schizosaccharomyces pombe.</title>
        <authorList>
            <person name="Wood V."/>
            <person name="Gwilliam R."/>
            <person name="Rajandream M.A."/>
            <person name="Lyne M.H."/>
            <person name="Lyne R."/>
            <person name="Stewart A."/>
            <person name="Sgouros J.G."/>
            <person name="Peat N."/>
            <person name="Hayles J."/>
            <person name="Baker S.G."/>
            <person name="Basham D."/>
            <person name="Bowman S."/>
            <person name="Brooks K."/>
            <person name="Brown D."/>
            <person name="Brown S."/>
            <person name="Chillingworth T."/>
            <person name="Churcher C.M."/>
            <person name="Collins M."/>
            <person name="Connor R."/>
            <person name="Cronin A."/>
            <person name="Davis P."/>
            <person name="Feltwell T."/>
            <person name="Fraser A."/>
            <person name="Gentles S."/>
            <person name="Goble A."/>
            <person name="Hamlin N."/>
            <person name="Harris D.E."/>
            <person name="Hidalgo J."/>
            <person name="Hodgson G."/>
            <person name="Holroyd S."/>
            <person name="Hornsby T."/>
            <person name="Howarth S."/>
            <person name="Huckle E.J."/>
            <person name="Hunt S."/>
            <person name="Jagels K."/>
            <person name="James K.D."/>
            <person name="Jones L."/>
            <person name="Jones M."/>
            <person name="Leather S."/>
            <person name="McDonald S."/>
            <person name="McLean J."/>
            <person name="Mooney P."/>
            <person name="Moule S."/>
            <person name="Mungall K.L."/>
            <person name="Murphy L.D."/>
            <person name="Niblett D."/>
            <person name="Odell C."/>
            <person name="Oliver K."/>
            <person name="O'Neil S."/>
            <person name="Pearson D."/>
            <person name="Quail M.A."/>
            <person name="Rabbinowitsch E."/>
            <person name="Rutherford K.M."/>
            <person name="Rutter S."/>
            <person name="Saunders D."/>
            <person name="Seeger K."/>
            <person name="Sharp S."/>
            <person name="Skelton J."/>
            <person name="Simmonds M.N."/>
            <person name="Squares R."/>
            <person name="Squares S."/>
            <person name="Stevens K."/>
            <person name="Taylor K."/>
            <person name="Taylor R.G."/>
            <person name="Tivey A."/>
            <person name="Walsh S.V."/>
            <person name="Warren T."/>
            <person name="Whitehead S."/>
            <person name="Woodward J.R."/>
            <person name="Volckaert G."/>
            <person name="Aert R."/>
            <person name="Robben J."/>
            <person name="Grymonprez B."/>
            <person name="Weltjens I."/>
            <person name="Vanstreels E."/>
            <person name="Rieger M."/>
            <person name="Schaefer M."/>
            <person name="Mueller-Auer S."/>
            <person name="Gabel C."/>
            <person name="Fuchs M."/>
            <person name="Duesterhoeft A."/>
            <person name="Fritzc C."/>
            <person name="Holzer E."/>
            <person name="Moestl D."/>
            <person name="Hilbert H."/>
            <person name="Borzym K."/>
            <person name="Langer I."/>
            <person name="Beck A."/>
            <person name="Lehrach H."/>
            <person name="Reinhardt R."/>
            <person name="Pohl T.M."/>
            <person name="Eger P."/>
            <person name="Zimmermann W."/>
            <person name="Wedler H."/>
            <person name="Wambutt R."/>
            <person name="Purnelle B."/>
            <person name="Goffeau A."/>
            <person name="Cadieu E."/>
            <person name="Dreano S."/>
            <person name="Gloux S."/>
            <person name="Lelaure V."/>
            <person name="Mottier S."/>
            <person name="Galibert F."/>
            <person name="Aves S.J."/>
            <person name="Xiang Z."/>
            <person name="Hunt C."/>
            <person name="Moore K."/>
            <person name="Hurst S.M."/>
            <person name="Lucas M."/>
            <person name="Rochet M."/>
            <person name="Gaillardin C."/>
            <person name="Tallada V.A."/>
            <person name="Garzon A."/>
            <person name="Thode G."/>
            <person name="Daga R.R."/>
            <person name="Cruzado L."/>
            <person name="Jimenez J."/>
            <person name="Sanchez M."/>
            <person name="del Rey F."/>
            <person name="Benito J."/>
            <person name="Dominguez A."/>
            <person name="Revuelta J.L."/>
            <person name="Moreno S."/>
            <person name="Armstrong J."/>
            <person name="Forsburg S.L."/>
            <person name="Cerutti L."/>
            <person name="Lowe T."/>
            <person name="McCombie W.R."/>
            <person name="Paulsen I."/>
            <person name="Potashkin J."/>
            <person name="Shpakovski G.V."/>
            <person name="Ussery D."/>
            <person name="Barrell B.G."/>
            <person name="Nurse P."/>
        </authorList>
    </citation>
    <scope>NUCLEOTIDE SEQUENCE [LARGE SCALE GENOMIC DNA]</scope>
    <source>
        <strain>972 / ATCC 24843</strain>
    </source>
</reference>
<reference key="2">
    <citation type="journal article" date="2006" name="Nat. Biotechnol.">
        <title>ORFeome cloning and global analysis of protein localization in the fission yeast Schizosaccharomyces pombe.</title>
        <authorList>
            <person name="Matsuyama A."/>
            <person name="Arai R."/>
            <person name="Yashiroda Y."/>
            <person name="Shirai A."/>
            <person name="Kamata A."/>
            <person name="Sekido S."/>
            <person name="Kobayashi Y."/>
            <person name="Hashimoto A."/>
            <person name="Hamamoto M."/>
            <person name="Hiraoka Y."/>
            <person name="Horinouchi S."/>
            <person name="Yoshida M."/>
        </authorList>
    </citation>
    <scope>SUBCELLULAR LOCATION [LARGE SCALE ANALYSIS]</scope>
</reference>
<reference key="3">
    <citation type="journal article" date="2009" name="Mol. Cell">
        <title>F-box-directed CRL complex assembly and regulation by the CSN and CAND1.</title>
        <authorList>
            <person name="Schmidt M.W."/>
            <person name="McQuary P.R."/>
            <person name="Wee S."/>
            <person name="Hofmann K."/>
            <person name="Wolf D.A."/>
        </authorList>
    </citation>
    <scope>FUNCTION</scope>
</reference>
<keyword id="KW-0539">Nucleus</keyword>
<keyword id="KW-1185">Reference proteome</keyword>
<keyword id="KW-0677">Repeat</keyword>
<keyword id="KW-0833">Ubl conjugation pathway</keyword>
<accession>Q9P3A8</accession>
<comment type="function">
    <text evidence="3">Key assembly factor of SCF (SKP1-CUL1-F-box protein) E3 ubiquitin ligase complexes that promotes the exchange of the substrate-recognition F-box subunit in SCF complexes, thereby playing a key role in the cellular repertoire of SCF complexes. Acts as a F-box protein exchange factor (Probable).</text>
</comment>
<comment type="subcellular location">
    <subcellularLocation>
        <location evidence="1">Nucleus</location>
    </subcellularLocation>
</comment>
<comment type="similarity">
    <text evidence="2">Belongs to the CAND family.</text>
</comment>
<name>CAND1_SCHPO</name>
<feature type="chain" id="PRO_0000374019" description="Cullin-associated NEDD8-dissociated protein 1">
    <location>
        <begin position="1"/>
        <end position="1220"/>
    </location>
</feature>
<feature type="repeat" description="HEAT 1">
    <location>
        <begin position="1"/>
        <end position="35"/>
    </location>
</feature>
<feature type="repeat" description="HEAT 2">
    <location>
        <begin position="42"/>
        <end position="79"/>
    </location>
</feature>
<feature type="repeat" description="HEAT 3">
    <location>
        <begin position="121"/>
        <end position="157"/>
    </location>
</feature>
<feature type="repeat" description="HEAT 4">
    <location>
        <begin position="259"/>
        <end position="295"/>
    </location>
</feature>
<feature type="repeat" description="HEAT 5">
    <location>
        <begin position="365"/>
        <end position="410"/>
    </location>
</feature>
<feature type="repeat" description="HEAT 6">
    <location>
        <begin position="615"/>
        <end position="650"/>
    </location>
</feature>
<feature type="repeat" description="HEAT 7">
    <location>
        <begin position="680"/>
        <end position="700"/>
    </location>
</feature>
<feature type="repeat" description="HEAT 8">
    <location>
        <begin position="701"/>
        <end position="737"/>
    </location>
</feature>
<feature type="repeat" description="HEAT 9">
    <location>
        <begin position="738"/>
        <end position="775"/>
    </location>
</feature>
<feature type="repeat" description="HEAT 10">
    <location>
        <begin position="810"/>
        <end position="847"/>
    </location>
</feature>
<feature type="repeat" description="HEAT 11">
    <location>
        <begin position="850"/>
        <end position="887"/>
    </location>
</feature>
<feature type="repeat" description="HEAT 12">
    <location>
        <begin position="1020"/>
        <end position="1057"/>
    </location>
</feature>
<protein>
    <recommendedName>
        <fullName>Cullin-associated NEDD8-dissociated protein 1</fullName>
    </recommendedName>
    <alternativeName>
        <fullName>Cullin-associated and neddylation-dissociated protein 1</fullName>
    </alternativeName>
</protein>